<proteinExistence type="inferred from homology"/>
<sequence length="374" mass="41712">MADNSKTRVVVGMSGGVDSSVTALLLKEQGYDVIGIFMKNWDDTDENGVCTATEDYKDVAKVADQIGIPYYSVNFEKEYWDRVFEYFLAEYRLGRTPNPDVMCNKEIKFKAFLDYAMQLGADYVATGHYAQVETDENGVVHMLRGIDNNKDQTYFLSQLSQAQLAKTMFPLGGMEKSEVRAIAERAGLATAKKKDSTGVCFIGEKNFKEFLSNYLPAKKGNMVTEDGEIKGQHDGLMYYTIGQRQGLGIGGGGKTQEPWFVIGKDLTTNTLYVGQGFHHEKLYATHLEASEVHFTVDTPMPKEFDCTAKFRYRQADIPVHVSLSEDGTKATVTFKEPARAVTPGQAVVFYDGMECLGGGLIDRAYQDEKELQYV</sequence>
<dbReference type="EC" id="2.8.1.13" evidence="1"/>
<dbReference type="EMBL" id="AE016830">
    <property type="protein sequence ID" value="AAO81803.1"/>
    <property type="molecule type" value="Genomic_DNA"/>
</dbReference>
<dbReference type="RefSeq" id="NP_815733.1">
    <property type="nucleotide sequence ID" value="NC_004668.1"/>
</dbReference>
<dbReference type="RefSeq" id="WP_002362075.1">
    <property type="nucleotide sequence ID" value="NZ_KE136528.1"/>
</dbReference>
<dbReference type="SMR" id="Q820U1"/>
<dbReference type="STRING" id="226185.EF_2070"/>
<dbReference type="EnsemblBacteria" id="AAO81803">
    <property type="protein sequence ID" value="AAO81803"/>
    <property type="gene ID" value="EF_2070"/>
</dbReference>
<dbReference type="GeneID" id="60894296"/>
<dbReference type="KEGG" id="efa:EF2070"/>
<dbReference type="PATRIC" id="fig|226185.45.peg.1459"/>
<dbReference type="eggNOG" id="COG0482">
    <property type="taxonomic scope" value="Bacteria"/>
</dbReference>
<dbReference type="HOGENOM" id="CLU_035188_1_0_9"/>
<dbReference type="Proteomes" id="UP000001415">
    <property type="component" value="Chromosome"/>
</dbReference>
<dbReference type="GO" id="GO:0005737">
    <property type="term" value="C:cytoplasm"/>
    <property type="evidence" value="ECO:0007669"/>
    <property type="project" value="UniProtKB-SubCell"/>
</dbReference>
<dbReference type="GO" id="GO:0005524">
    <property type="term" value="F:ATP binding"/>
    <property type="evidence" value="ECO:0007669"/>
    <property type="project" value="UniProtKB-KW"/>
</dbReference>
<dbReference type="GO" id="GO:0000049">
    <property type="term" value="F:tRNA binding"/>
    <property type="evidence" value="ECO:0007669"/>
    <property type="project" value="UniProtKB-KW"/>
</dbReference>
<dbReference type="GO" id="GO:0103016">
    <property type="term" value="F:tRNA-uridine 2-sulfurtransferase activity"/>
    <property type="evidence" value="ECO:0007669"/>
    <property type="project" value="UniProtKB-EC"/>
</dbReference>
<dbReference type="GO" id="GO:0002143">
    <property type="term" value="P:tRNA wobble position uridine thiolation"/>
    <property type="evidence" value="ECO:0007669"/>
    <property type="project" value="TreeGrafter"/>
</dbReference>
<dbReference type="CDD" id="cd01998">
    <property type="entry name" value="MnmA_TRMU-like"/>
    <property type="match status" value="1"/>
</dbReference>
<dbReference type="FunFam" id="2.30.30.280:FF:000001">
    <property type="entry name" value="tRNA-specific 2-thiouridylase MnmA"/>
    <property type="match status" value="1"/>
</dbReference>
<dbReference type="FunFam" id="2.40.30.10:FF:000023">
    <property type="entry name" value="tRNA-specific 2-thiouridylase MnmA"/>
    <property type="match status" value="1"/>
</dbReference>
<dbReference type="FunFam" id="3.40.50.620:FF:000004">
    <property type="entry name" value="tRNA-specific 2-thiouridylase MnmA"/>
    <property type="match status" value="1"/>
</dbReference>
<dbReference type="Gene3D" id="2.30.30.280">
    <property type="entry name" value="Adenine nucleotide alpha hydrolases-like domains"/>
    <property type="match status" value="1"/>
</dbReference>
<dbReference type="Gene3D" id="3.40.50.620">
    <property type="entry name" value="HUPs"/>
    <property type="match status" value="1"/>
</dbReference>
<dbReference type="Gene3D" id="2.40.30.10">
    <property type="entry name" value="Translation factors"/>
    <property type="match status" value="1"/>
</dbReference>
<dbReference type="HAMAP" id="MF_00144">
    <property type="entry name" value="tRNA_thiouridyl_MnmA"/>
    <property type="match status" value="1"/>
</dbReference>
<dbReference type="InterPro" id="IPR004506">
    <property type="entry name" value="MnmA-like"/>
</dbReference>
<dbReference type="InterPro" id="IPR046885">
    <property type="entry name" value="MnmA-like_C"/>
</dbReference>
<dbReference type="InterPro" id="IPR046884">
    <property type="entry name" value="MnmA-like_central"/>
</dbReference>
<dbReference type="InterPro" id="IPR023382">
    <property type="entry name" value="MnmA-like_central_sf"/>
</dbReference>
<dbReference type="InterPro" id="IPR014729">
    <property type="entry name" value="Rossmann-like_a/b/a_fold"/>
</dbReference>
<dbReference type="NCBIfam" id="NF001138">
    <property type="entry name" value="PRK00143.1"/>
    <property type="match status" value="1"/>
</dbReference>
<dbReference type="NCBIfam" id="TIGR00420">
    <property type="entry name" value="trmU"/>
    <property type="match status" value="1"/>
</dbReference>
<dbReference type="PANTHER" id="PTHR11933:SF5">
    <property type="entry name" value="MITOCHONDRIAL TRNA-SPECIFIC 2-THIOURIDYLASE 1"/>
    <property type="match status" value="1"/>
</dbReference>
<dbReference type="PANTHER" id="PTHR11933">
    <property type="entry name" value="TRNA 5-METHYLAMINOMETHYL-2-THIOURIDYLATE -METHYLTRANSFERASE"/>
    <property type="match status" value="1"/>
</dbReference>
<dbReference type="Pfam" id="PF03054">
    <property type="entry name" value="tRNA_Me_trans"/>
    <property type="match status" value="1"/>
</dbReference>
<dbReference type="Pfam" id="PF20258">
    <property type="entry name" value="tRNA_Me_trans_C"/>
    <property type="match status" value="1"/>
</dbReference>
<dbReference type="Pfam" id="PF20259">
    <property type="entry name" value="tRNA_Me_trans_M"/>
    <property type="match status" value="1"/>
</dbReference>
<dbReference type="SUPFAM" id="SSF52402">
    <property type="entry name" value="Adenine nucleotide alpha hydrolases-like"/>
    <property type="match status" value="1"/>
</dbReference>
<evidence type="ECO:0000255" key="1">
    <source>
        <dbReference type="HAMAP-Rule" id="MF_00144"/>
    </source>
</evidence>
<organism>
    <name type="scientific">Enterococcus faecalis (strain ATCC 700802 / V583)</name>
    <dbReference type="NCBI Taxonomy" id="226185"/>
    <lineage>
        <taxon>Bacteria</taxon>
        <taxon>Bacillati</taxon>
        <taxon>Bacillota</taxon>
        <taxon>Bacilli</taxon>
        <taxon>Lactobacillales</taxon>
        <taxon>Enterococcaceae</taxon>
        <taxon>Enterococcus</taxon>
    </lineage>
</organism>
<reference key="1">
    <citation type="journal article" date="2003" name="Science">
        <title>Role of mobile DNA in the evolution of vancomycin-resistant Enterococcus faecalis.</title>
        <authorList>
            <person name="Paulsen I.T."/>
            <person name="Banerjei L."/>
            <person name="Myers G.S.A."/>
            <person name="Nelson K.E."/>
            <person name="Seshadri R."/>
            <person name="Read T.D."/>
            <person name="Fouts D.E."/>
            <person name="Eisen J.A."/>
            <person name="Gill S.R."/>
            <person name="Heidelberg J.F."/>
            <person name="Tettelin H."/>
            <person name="Dodson R.J."/>
            <person name="Umayam L.A."/>
            <person name="Brinkac L.M."/>
            <person name="Beanan M.J."/>
            <person name="Daugherty S.C."/>
            <person name="DeBoy R.T."/>
            <person name="Durkin S.A."/>
            <person name="Kolonay J.F."/>
            <person name="Madupu R."/>
            <person name="Nelson W.C."/>
            <person name="Vamathevan J.J."/>
            <person name="Tran B."/>
            <person name="Upton J."/>
            <person name="Hansen T."/>
            <person name="Shetty J."/>
            <person name="Khouri H.M."/>
            <person name="Utterback T.R."/>
            <person name="Radune D."/>
            <person name="Ketchum K.A."/>
            <person name="Dougherty B.A."/>
            <person name="Fraser C.M."/>
        </authorList>
    </citation>
    <scope>NUCLEOTIDE SEQUENCE [LARGE SCALE GENOMIC DNA]</scope>
    <source>
        <strain>ATCC 700802 / V583</strain>
    </source>
</reference>
<accession>Q820U1</accession>
<keyword id="KW-0067">ATP-binding</keyword>
<keyword id="KW-0963">Cytoplasm</keyword>
<keyword id="KW-1015">Disulfide bond</keyword>
<keyword id="KW-0547">Nucleotide-binding</keyword>
<keyword id="KW-1185">Reference proteome</keyword>
<keyword id="KW-0694">RNA-binding</keyword>
<keyword id="KW-0808">Transferase</keyword>
<keyword id="KW-0819">tRNA processing</keyword>
<keyword id="KW-0820">tRNA-binding</keyword>
<comment type="function">
    <text evidence="1">Catalyzes the 2-thiolation of uridine at the wobble position (U34) of tRNA, leading to the formation of s(2)U34.</text>
</comment>
<comment type="catalytic activity">
    <reaction evidence="1">
        <text>S-sulfanyl-L-cysteinyl-[protein] + uridine(34) in tRNA + AH2 + ATP = 2-thiouridine(34) in tRNA + L-cysteinyl-[protein] + A + AMP + diphosphate + H(+)</text>
        <dbReference type="Rhea" id="RHEA:47032"/>
        <dbReference type="Rhea" id="RHEA-COMP:10131"/>
        <dbReference type="Rhea" id="RHEA-COMP:11726"/>
        <dbReference type="Rhea" id="RHEA-COMP:11727"/>
        <dbReference type="Rhea" id="RHEA-COMP:11728"/>
        <dbReference type="ChEBI" id="CHEBI:13193"/>
        <dbReference type="ChEBI" id="CHEBI:15378"/>
        <dbReference type="ChEBI" id="CHEBI:17499"/>
        <dbReference type="ChEBI" id="CHEBI:29950"/>
        <dbReference type="ChEBI" id="CHEBI:30616"/>
        <dbReference type="ChEBI" id="CHEBI:33019"/>
        <dbReference type="ChEBI" id="CHEBI:61963"/>
        <dbReference type="ChEBI" id="CHEBI:65315"/>
        <dbReference type="ChEBI" id="CHEBI:87170"/>
        <dbReference type="ChEBI" id="CHEBI:456215"/>
        <dbReference type="EC" id="2.8.1.13"/>
    </reaction>
</comment>
<comment type="subcellular location">
    <subcellularLocation>
        <location evidence="1">Cytoplasm</location>
    </subcellularLocation>
</comment>
<comment type="similarity">
    <text evidence="1">Belongs to the MnmA/TRMU family.</text>
</comment>
<name>MNMA_ENTFA</name>
<feature type="chain" id="PRO_0000121632" description="tRNA-specific 2-thiouridylase MnmA">
    <location>
        <begin position="1"/>
        <end position="374"/>
    </location>
</feature>
<feature type="region of interest" description="Interaction with target base in tRNA" evidence="1">
    <location>
        <begin position="98"/>
        <end position="100"/>
    </location>
</feature>
<feature type="region of interest" description="Interaction with tRNA" evidence="1">
    <location>
        <begin position="150"/>
        <end position="152"/>
    </location>
</feature>
<feature type="region of interest" description="Interaction with tRNA" evidence="1">
    <location>
        <begin position="311"/>
        <end position="312"/>
    </location>
</feature>
<feature type="active site" description="Nucleophile" evidence="1">
    <location>
        <position position="103"/>
    </location>
</feature>
<feature type="active site" description="Cysteine persulfide intermediate" evidence="1">
    <location>
        <position position="200"/>
    </location>
</feature>
<feature type="binding site" evidence="1">
    <location>
        <begin position="12"/>
        <end position="19"/>
    </location>
    <ligand>
        <name>ATP</name>
        <dbReference type="ChEBI" id="CHEBI:30616"/>
    </ligand>
</feature>
<feature type="binding site" evidence="1">
    <location>
        <position position="38"/>
    </location>
    <ligand>
        <name>ATP</name>
        <dbReference type="ChEBI" id="CHEBI:30616"/>
    </ligand>
</feature>
<feature type="binding site" evidence="1">
    <location>
        <position position="127"/>
    </location>
    <ligand>
        <name>ATP</name>
        <dbReference type="ChEBI" id="CHEBI:30616"/>
    </ligand>
</feature>
<feature type="site" description="Interaction with tRNA" evidence="1">
    <location>
        <position position="128"/>
    </location>
</feature>
<feature type="site" description="Interaction with tRNA" evidence="1">
    <location>
        <position position="345"/>
    </location>
</feature>
<feature type="disulfide bond" description="Alternate" evidence="1">
    <location>
        <begin position="103"/>
        <end position="200"/>
    </location>
</feature>
<gene>
    <name evidence="1" type="primary">mnmA</name>
    <name type="synonym">trmU</name>
    <name type="ordered locus">EF_2070</name>
</gene>
<protein>
    <recommendedName>
        <fullName evidence="1">tRNA-specific 2-thiouridylase MnmA</fullName>
        <ecNumber evidence="1">2.8.1.13</ecNumber>
    </recommendedName>
</protein>